<sequence>MDYINAAILGVIEGITEFLPISSTGHLIIAEQWLGHRSDMFNIVIQAGAILAVTIIYWRRLLDLVLGWREPENRDYAAKLIVAFLITAILGLVVKKLGFELPETATPIAWALIIGGIWMIFAEWAAARRPPHKQITWLVAILVGIAQIVAGVFPGTSRSGATIFVALLAGTGNRAAATEFAFLVGIPTMYAASGYELLKTFKDGGAAGEDWTALAIAFVVSTIVAFIAVKWLLAYIRSNRFTLFAIYRIILGVLLLGMTATGMIA</sequence>
<name>UPPP_RHIEC</name>
<feature type="chain" id="PRO_0000250252" description="Undecaprenyl-diphosphatase">
    <location>
        <begin position="1"/>
        <end position="265"/>
    </location>
</feature>
<feature type="transmembrane region" description="Helical" evidence="1">
    <location>
        <begin position="38"/>
        <end position="58"/>
    </location>
</feature>
<feature type="transmembrane region" description="Helical" evidence="1">
    <location>
        <begin position="80"/>
        <end position="100"/>
    </location>
</feature>
<feature type="transmembrane region" description="Helical" evidence="1">
    <location>
        <begin position="107"/>
        <end position="127"/>
    </location>
</feature>
<feature type="transmembrane region" description="Helical" evidence="1">
    <location>
        <begin position="135"/>
        <end position="155"/>
    </location>
</feature>
<feature type="transmembrane region" description="Helical" evidence="1">
    <location>
        <begin position="175"/>
        <end position="195"/>
    </location>
</feature>
<feature type="transmembrane region" description="Helical" evidence="1">
    <location>
        <begin position="213"/>
        <end position="233"/>
    </location>
</feature>
<feature type="transmembrane region" description="Helical" evidence="1">
    <location>
        <begin position="244"/>
        <end position="264"/>
    </location>
</feature>
<dbReference type="EC" id="3.6.1.27" evidence="1"/>
<dbReference type="EMBL" id="CP000133">
    <property type="protein sequence ID" value="ABC89132.1"/>
    <property type="molecule type" value="Genomic_DNA"/>
</dbReference>
<dbReference type="RefSeq" id="WP_011423694.1">
    <property type="nucleotide sequence ID" value="NC_007761.1"/>
</dbReference>
<dbReference type="SMR" id="Q2KDF4"/>
<dbReference type="KEGG" id="ret:RHE_CH00310"/>
<dbReference type="eggNOG" id="COG1968">
    <property type="taxonomic scope" value="Bacteria"/>
</dbReference>
<dbReference type="HOGENOM" id="CLU_060296_2_0_5"/>
<dbReference type="OrthoDB" id="9808289at2"/>
<dbReference type="Proteomes" id="UP000001936">
    <property type="component" value="Chromosome"/>
</dbReference>
<dbReference type="GO" id="GO:0005886">
    <property type="term" value="C:plasma membrane"/>
    <property type="evidence" value="ECO:0007669"/>
    <property type="project" value="UniProtKB-SubCell"/>
</dbReference>
<dbReference type="GO" id="GO:0050380">
    <property type="term" value="F:undecaprenyl-diphosphatase activity"/>
    <property type="evidence" value="ECO:0007669"/>
    <property type="project" value="UniProtKB-UniRule"/>
</dbReference>
<dbReference type="GO" id="GO:0071555">
    <property type="term" value="P:cell wall organization"/>
    <property type="evidence" value="ECO:0007669"/>
    <property type="project" value="UniProtKB-KW"/>
</dbReference>
<dbReference type="GO" id="GO:0009252">
    <property type="term" value="P:peptidoglycan biosynthetic process"/>
    <property type="evidence" value="ECO:0007669"/>
    <property type="project" value="UniProtKB-KW"/>
</dbReference>
<dbReference type="GO" id="GO:0008360">
    <property type="term" value="P:regulation of cell shape"/>
    <property type="evidence" value="ECO:0007669"/>
    <property type="project" value="UniProtKB-KW"/>
</dbReference>
<dbReference type="GO" id="GO:0046677">
    <property type="term" value="P:response to antibiotic"/>
    <property type="evidence" value="ECO:0007669"/>
    <property type="project" value="UniProtKB-UniRule"/>
</dbReference>
<dbReference type="HAMAP" id="MF_01006">
    <property type="entry name" value="Undec_diphosphatase"/>
    <property type="match status" value="1"/>
</dbReference>
<dbReference type="InterPro" id="IPR003824">
    <property type="entry name" value="UppP"/>
</dbReference>
<dbReference type="NCBIfam" id="NF001390">
    <property type="entry name" value="PRK00281.1-4"/>
    <property type="match status" value="1"/>
</dbReference>
<dbReference type="PANTHER" id="PTHR30622">
    <property type="entry name" value="UNDECAPRENYL-DIPHOSPHATASE"/>
    <property type="match status" value="1"/>
</dbReference>
<dbReference type="PANTHER" id="PTHR30622:SF3">
    <property type="entry name" value="UNDECAPRENYL-DIPHOSPHATASE"/>
    <property type="match status" value="1"/>
</dbReference>
<dbReference type="Pfam" id="PF02673">
    <property type="entry name" value="BacA"/>
    <property type="match status" value="1"/>
</dbReference>
<gene>
    <name evidence="1" type="primary">uppP</name>
    <name type="ordered locus">RHE_CH00310</name>
</gene>
<keyword id="KW-0046">Antibiotic resistance</keyword>
<keyword id="KW-0997">Cell inner membrane</keyword>
<keyword id="KW-1003">Cell membrane</keyword>
<keyword id="KW-0133">Cell shape</keyword>
<keyword id="KW-0961">Cell wall biogenesis/degradation</keyword>
<keyword id="KW-0378">Hydrolase</keyword>
<keyword id="KW-0472">Membrane</keyword>
<keyword id="KW-0573">Peptidoglycan synthesis</keyword>
<keyword id="KW-1185">Reference proteome</keyword>
<keyword id="KW-0812">Transmembrane</keyword>
<keyword id="KW-1133">Transmembrane helix</keyword>
<protein>
    <recommendedName>
        <fullName evidence="1">Undecaprenyl-diphosphatase</fullName>
        <ecNumber evidence="1">3.6.1.27</ecNumber>
    </recommendedName>
    <alternativeName>
        <fullName evidence="1">Bacitracin resistance protein</fullName>
    </alternativeName>
    <alternativeName>
        <fullName evidence="1">Undecaprenyl pyrophosphate phosphatase</fullName>
    </alternativeName>
</protein>
<organism>
    <name type="scientific">Rhizobium etli (strain ATCC 51251 / DSM 11541 / JCM 21823 / NBRC 15573 / CFN 42)</name>
    <dbReference type="NCBI Taxonomy" id="347834"/>
    <lineage>
        <taxon>Bacteria</taxon>
        <taxon>Pseudomonadati</taxon>
        <taxon>Pseudomonadota</taxon>
        <taxon>Alphaproteobacteria</taxon>
        <taxon>Hyphomicrobiales</taxon>
        <taxon>Rhizobiaceae</taxon>
        <taxon>Rhizobium/Agrobacterium group</taxon>
        <taxon>Rhizobium</taxon>
    </lineage>
</organism>
<proteinExistence type="inferred from homology"/>
<evidence type="ECO:0000255" key="1">
    <source>
        <dbReference type="HAMAP-Rule" id="MF_01006"/>
    </source>
</evidence>
<reference key="1">
    <citation type="journal article" date="2006" name="Proc. Natl. Acad. Sci. U.S.A.">
        <title>The partitioned Rhizobium etli genome: genetic and metabolic redundancy in seven interacting replicons.</title>
        <authorList>
            <person name="Gonzalez V."/>
            <person name="Santamaria R.I."/>
            <person name="Bustos P."/>
            <person name="Hernandez-Gonzalez I."/>
            <person name="Medrano-Soto A."/>
            <person name="Moreno-Hagelsieb G."/>
            <person name="Janga S.C."/>
            <person name="Ramirez M.A."/>
            <person name="Jimenez-Jacinto V."/>
            <person name="Collado-Vides J."/>
            <person name="Davila G."/>
        </authorList>
    </citation>
    <scope>NUCLEOTIDE SEQUENCE [LARGE SCALE GENOMIC DNA]</scope>
    <source>
        <strain>ATCC 51251 / DSM 11541 / JCM 21823 / NBRC 15573 / CFN 42</strain>
    </source>
</reference>
<accession>Q2KDF4</accession>
<comment type="function">
    <text evidence="1">Catalyzes the dephosphorylation of undecaprenyl diphosphate (UPP). Confers resistance to bacitracin.</text>
</comment>
<comment type="catalytic activity">
    <reaction evidence="1">
        <text>di-trans,octa-cis-undecaprenyl diphosphate + H2O = di-trans,octa-cis-undecaprenyl phosphate + phosphate + H(+)</text>
        <dbReference type="Rhea" id="RHEA:28094"/>
        <dbReference type="ChEBI" id="CHEBI:15377"/>
        <dbReference type="ChEBI" id="CHEBI:15378"/>
        <dbReference type="ChEBI" id="CHEBI:43474"/>
        <dbReference type="ChEBI" id="CHEBI:58405"/>
        <dbReference type="ChEBI" id="CHEBI:60392"/>
        <dbReference type="EC" id="3.6.1.27"/>
    </reaction>
</comment>
<comment type="subcellular location">
    <subcellularLocation>
        <location evidence="1">Cell inner membrane</location>
        <topology evidence="1">Multi-pass membrane protein</topology>
    </subcellularLocation>
</comment>
<comment type="miscellaneous">
    <text>Bacitracin is thought to be involved in the inhibition of peptidoglycan synthesis by sequestering undecaprenyl diphosphate, thereby reducing the pool of lipid carrier available.</text>
</comment>
<comment type="similarity">
    <text evidence="1">Belongs to the UppP family.</text>
</comment>